<sequence length="115" mass="13573">MPHTSVKKTKTNINQQKYIENWEGYEHVKRKLIKLRMKYKCSSNSLKRICGGEELIHNTLSAMNGNTYKIKHVVIDPSTPVVYNLKRHNHLSAYITRKYNFSPFLVEKTKDDLFM</sequence>
<name>Y7843_DICDI</name>
<proteinExistence type="predicted"/>
<organism>
    <name type="scientific">Dictyostelium discoideum</name>
    <name type="common">Social amoeba</name>
    <dbReference type="NCBI Taxonomy" id="44689"/>
    <lineage>
        <taxon>Eukaryota</taxon>
        <taxon>Amoebozoa</taxon>
        <taxon>Evosea</taxon>
        <taxon>Eumycetozoa</taxon>
        <taxon>Dictyostelia</taxon>
        <taxon>Dictyosteliales</taxon>
        <taxon>Dictyosteliaceae</taxon>
        <taxon>Dictyostelium</taxon>
    </lineage>
</organism>
<reference key="1">
    <citation type="journal article" date="2002" name="Nature">
        <title>Sequence and analysis of chromosome 2 of Dictyostelium discoideum.</title>
        <authorList>
            <person name="Gloeckner G."/>
            <person name="Eichinger L."/>
            <person name="Szafranski K."/>
            <person name="Pachebat J.A."/>
            <person name="Bankier A.T."/>
            <person name="Dear P.H."/>
            <person name="Lehmann R."/>
            <person name="Baumgart C."/>
            <person name="Parra G."/>
            <person name="Abril J.F."/>
            <person name="Guigo R."/>
            <person name="Kumpf K."/>
            <person name="Tunggal B."/>
            <person name="Cox E.C."/>
            <person name="Quail M.A."/>
            <person name="Platzer M."/>
            <person name="Rosenthal A."/>
            <person name="Noegel A.A."/>
        </authorList>
    </citation>
    <scope>NUCLEOTIDE SEQUENCE [LARGE SCALE GENOMIC DNA]</scope>
    <source>
        <strain>AX4</strain>
    </source>
</reference>
<reference key="2">
    <citation type="journal article" date="2005" name="Nature">
        <title>The genome of the social amoeba Dictyostelium discoideum.</title>
        <authorList>
            <person name="Eichinger L."/>
            <person name="Pachebat J.A."/>
            <person name="Gloeckner G."/>
            <person name="Rajandream M.A."/>
            <person name="Sucgang R."/>
            <person name="Berriman M."/>
            <person name="Song J."/>
            <person name="Olsen R."/>
            <person name="Szafranski K."/>
            <person name="Xu Q."/>
            <person name="Tunggal B."/>
            <person name="Kummerfeld S."/>
            <person name="Madera M."/>
            <person name="Konfortov B.A."/>
            <person name="Rivero F."/>
            <person name="Bankier A.T."/>
            <person name="Lehmann R."/>
            <person name="Hamlin N."/>
            <person name="Davies R."/>
            <person name="Gaudet P."/>
            <person name="Fey P."/>
            <person name="Pilcher K."/>
            <person name="Chen G."/>
            <person name="Saunders D."/>
            <person name="Sodergren E.J."/>
            <person name="Davis P."/>
            <person name="Kerhornou A."/>
            <person name="Nie X."/>
            <person name="Hall N."/>
            <person name="Anjard C."/>
            <person name="Hemphill L."/>
            <person name="Bason N."/>
            <person name="Farbrother P."/>
            <person name="Desany B."/>
            <person name="Just E."/>
            <person name="Morio T."/>
            <person name="Rost R."/>
            <person name="Churcher C.M."/>
            <person name="Cooper J."/>
            <person name="Haydock S."/>
            <person name="van Driessche N."/>
            <person name="Cronin A."/>
            <person name="Goodhead I."/>
            <person name="Muzny D.M."/>
            <person name="Mourier T."/>
            <person name="Pain A."/>
            <person name="Lu M."/>
            <person name="Harper D."/>
            <person name="Lindsay R."/>
            <person name="Hauser H."/>
            <person name="James K.D."/>
            <person name="Quiles M."/>
            <person name="Madan Babu M."/>
            <person name="Saito T."/>
            <person name="Buchrieser C."/>
            <person name="Wardroper A."/>
            <person name="Felder M."/>
            <person name="Thangavelu M."/>
            <person name="Johnson D."/>
            <person name="Knights A."/>
            <person name="Loulseged H."/>
            <person name="Mungall K.L."/>
            <person name="Oliver K."/>
            <person name="Price C."/>
            <person name="Quail M.A."/>
            <person name="Urushihara H."/>
            <person name="Hernandez J."/>
            <person name="Rabbinowitsch E."/>
            <person name="Steffen D."/>
            <person name="Sanders M."/>
            <person name="Ma J."/>
            <person name="Kohara Y."/>
            <person name="Sharp S."/>
            <person name="Simmonds M.N."/>
            <person name="Spiegler S."/>
            <person name="Tivey A."/>
            <person name="Sugano S."/>
            <person name="White B."/>
            <person name="Walker D."/>
            <person name="Woodward J.R."/>
            <person name="Winckler T."/>
            <person name="Tanaka Y."/>
            <person name="Shaulsky G."/>
            <person name="Schleicher M."/>
            <person name="Weinstock G.M."/>
            <person name="Rosenthal A."/>
            <person name="Cox E.C."/>
            <person name="Chisholm R.L."/>
            <person name="Gibbs R.A."/>
            <person name="Loomis W.F."/>
            <person name="Platzer M."/>
            <person name="Kay R.R."/>
            <person name="Williams J.G."/>
            <person name="Dear P.H."/>
            <person name="Noegel A.A."/>
            <person name="Barrell B.G."/>
            <person name="Kuspa A."/>
        </authorList>
    </citation>
    <scope>NUCLEOTIDE SEQUENCE [LARGE SCALE GENOMIC DNA]</scope>
    <source>
        <strain>AX4</strain>
    </source>
</reference>
<protein>
    <recommendedName>
        <fullName>Putative uncharacterized protein DDB_G0274271</fullName>
    </recommendedName>
</protein>
<feature type="chain" id="PRO_0000348144" description="Putative uncharacterized protein DDB_G0274271">
    <location>
        <begin position="1"/>
        <end position="115"/>
    </location>
</feature>
<keyword id="KW-1185">Reference proteome</keyword>
<accession>Q86J13</accession>
<accession>Q555T6</accession>
<gene>
    <name type="ORF">DDB_G0274271</name>
</gene>
<dbReference type="EMBL" id="AAFI02000012">
    <property type="protein sequence ID" value="EAL70028.1"/>
    <property type="molecule type" value="Genomic_DNA"/>
</dbReference>
<dbReference type="RefSeq" id="XP_643974.1">
    <property type="nucleotide sequence ID" value="XM_638882.1"/>
</dbReference>
<dbReference type="SMR" id="Q86J13"/>
<dbReference type="FunCoup" id="Q86J13">
    <property type="interactions" value="877"/>
</dbReference>
<dbReference type="PaxDb" id="44689-DDB0167843"/>
<dbReference type="EnsemblProtists" id="EAL70028">
    <property type="protein sequence ID" value="EAL70028"/>
    <property type="gene ID" value="DDB_G0274271"/>
</dbReference>
<dbReference type="GeneID" id="8619400"/>
<dbReference type="KEGG" id="ddi:DDB_G0274271"/>
<dbReference type="dictyBase" id="DDB_G0274271"/>
<dbReference type="VEuPathDB" id="AmoebaDB:DDB_G0274271"/>
<dbReference type="eggNOG" id="ENOG502RIK3">
    <property type="taxonomic scope" value="Eukaryota"/>
</dbReference>
<dbReference type="HOGENOM" id="CLU_2113554_0_0_1"/>
<dbReference type="InParanoid" id="Q86J13"/>
<dbReference type="OMA" id="IENWEGY"/>
<dbReference type="PRO" id="PR:Q86J13"/>
<dbReference type="Proteomes" id="UP000002195">
    <property type="component" value="Chromosome 2"/>
</dbReference>